<name>UBQL2_MOUSE</name>
<gene>
    <name type="primary">Ubqln2</name>
    <name type="synonym">Plic2</name>
</gene>
<feature type="initiator methionine" description="Removed" evidence="1">
    <location>
        <position position="1"/>
    </location>
</feature>
<feature type="chain" id="PRO_0000211012" description="Ubiquilin-2">
    <location>
        <begin position="2"/>
        <end position="638"/>
    </location>
</feature>
<feature type="domain" description="Ubiquitin-like" evidence="4">
    <location>
        <begin position="33"/>
        <end position="107"/>
    </location>
</feature>
<feature type="domain" description="STI1 1" evidence="2">
    <location>
        <begin position="189"/>
        <end position="217"/>
    </location>
</feature>
<feature type="domain" description="STI1 2" evidence="2">
    <location>
        <begin position="219"/>
        <end position="258"/>
    </location>
</feature>
<feature type="domain" description="STI1 3" evidence="2">
    <location>
        <begin position="393"/>
        <end position="440"/>
    </location>
</feature>
<feature type="domain" description="STI1 4" evidence="2">
    <location>
        <begin position="444"/>
        <end position="476"/>
    </location>
</feature>
<feature type="repeat" description="1">
    <location>
        <begin position="505"/>
        <end position="507"/>
    </location>
</feature>
<feature type="repeat" description="2">
    <location>
        <begin position="508"/>
        <end position="510"/>
    </location>
</feature>
<feature type="repeat" description="3">
    <location>
        <begin position="511"/>
        <end position="513"/>
    </location>
</feature>
<feature type="repeat" description="4">
    <location>
        <begin position="514"/>
        <end position="516"/>
    </location>
</feature>
<feature type="repeat" description="5">
    <location>
        <begin position="517"/>
        <end position="519"/>
    </location>
</feature>
<feature type="repeat" description="6">
    <location>
        <begin position="520"/>
        <end position="522"/>
    </location>
</feature>
<feature type="repeat" description="7">
    <location>
        <begin position="523"/>
        <end position="525"/>
    </location>
</feature>
<feature type="repeat" description="8">
    <location>
        <begin position="526"/>
        <end position="528"/>
    </location>
</feature>
<feature type="repeat" description="9">
    <location>
        <begin position="529"/>
        <end position="531"/>
    </location>
</feature>
<feature type="repeat" description="10">
    <location>
        <begin position="532"/>
        <end position="533"/>
    </location>
</feature>
<feature type="repeat" description="11">
    <location>
        <begin position="535"/>
        <end position="537"/>
    </location>
</feature>
<feature type="domain" description="UBA" evidence="3">
    <location>
        <begin position="589"/>
        <end position="635"/>
    </location>
</feature>
<feature type="region of interest" description="Disordered" evidence="5">
    <location>
        <begin position="1"/>
        <end position="31"/>
    </location>
</feature>
<feature type="region of interest" description="Disordered" evidence="5">
    <location>
        <begin position="107"/>
        <end position="158"/>
    </location>
</feature>
<feature type="region of interest" description="Disordered" evidence="5">
    <location>
        <begin position="298"/>
        <end position="364"/>
    </location>
</feature>
<feature type="region of interest" description="11 X 3 AA tandem repeats P-X-X">
    <location>
        <begin position="505"/>
        <end position="537"/>
    </location>
</feature>
<feature type="region of interest" description="Disordered" evidence="5">
    <location>
        <begin position="528"/>
        <end position="570"/>
    </location>
</feature>
<feature type="compositionally biased region" description="Low complexity" evidence="5">
    <location>
        <begin position="1"/>
        <end position="26"/>
    </location>
</feature>
<feature type="compositionally biased region" description="Low complexity" evidence="5">
    <location>
        <begin position="112"/>
        <end position="158"/>
    </location>
</feature>
<feature type="compositionally biased region" description="Low complexity" evidence="5">
    <location>
        <begin position="305"/>
        <end position="316"/>
    </location>
</feature>
<feature type="compositionally biased region" description="Pro residues" evidence="5">
    <location>
        <begin position="327"/>
        <end position="336"/>
    </location>
</feature>
<feature type="compositionally biased region" description="Low complexity" evidence="5">
    <location>
        <begin position="337"/>
        <end position="364"/>
    </location>
</feature>
<feature type="compositionally biased region" description="Low complexity" evidence="5">
    <location>
        <begin position="533"/>
        <end position="551"/>
    </location>
</feature>
<feature type="compositionally biased region" description="Polar residues" evidence="5">
    <location>
        <begin position="552"/>
        <end position="570"/>
    </location>
</feature>
<feature type="modified residue" description="N-acetylalanine" evidence="1">
    <location>
        <position position="2"/>
    </location>
</feature>
<feature type="modified residue" description="Phosphoserine" evidence="8">
    <location>
        <position position="25"/>
    </location>
</feature>
<feature type="sequence conflict" description="In Ref. 1; AAF01366." evidence="7" ref="1">
    <original>Q</original>
    <variation>R</variation>
    <location>
        <position position="179"/>
    </location>
</feature>
<feature type="sequence conflict" description="In Ref. 4; AAH21824." evidence="7" ref="4">
    <location>
        <position position="362"/>
    </location>
</feature>
<proteinExistence type="evidence at protein level"/>
<dbReference type="EMBL" id="AF177346">
    <property type="protein sequence ID" value="AAF01366.1"/>
    <property type="molecule type" value="mRNA"/>
</dbReference>
<dbReference type="EMBL" id="AL844583">
    <property type="status" value="NOT_ANNOTATED_CDS"/>
    <property type="molecule type" value="Genomic_DNA"/>
</dbReference>
<dbReference type="EMBL" id="CH466653">
    <property type="protein sequence ID" value="EDL31351.1"/>
    <property type="molecule type" value="Genomic_DNA"/>
</dbReference>
<dbReference type="EMBL" id="BC021824">
    <property type="protein sequence ID" value="AAH21824.1"/>
    <property type="molecule type" value="mRNA"/>
</dbReference>
<dbReference type="EMBL" id="BC053022">
    <property type="protein sequence ID" value="AAH53022.1"/>
    <property type="molecule type" value="mRNA"/>
</dbReference>
<dbReference type="CCDS" id="CCDS30482.1"/>
<dbReference type="RefSeq" id="NP_061268.2">
    <property type="nucleotide sequence ID" value="NM_018798.2"/>
</dbReference>
<dbReference type="SMR" id="Q9QZM0"/>
<dbReference type="BioGRID" id="207684">
    <property type="interactions" value="50"/>
</dbReference>
<dbReference type="FunCoup" id="Q9QZM0">
    <property type="interactions" value="3687"/>
</dbReference>
<dbReference type="STRING" id="10090.ENSMUSP00000056888"/>
<dbReference type="GlyGen" id="Q9QZM0">
    <property type="glycosylation" value="7 sites, 1 O-linked glycan (6 sites)"/>
</dbReference>
<dbReference type="iPTMnet" id="Q9QZM0"/>
<dbReference type="MetOSite" id="Q9QZM0"/>
<dbReference type="PhosphoSitePlus" id="Q9QZM0"/>
<dbReference type="SwissPalm" id="Q9QZM0"/>
<dbReference type="jPOST" id="Q9QZM0"/>
<dbReference type="PaxDb" id="10090-ENSMUSP00000056888"/>
<dbReference type="PeptideAtlas" id="Q9QZM0"/>
<dbReference type="ProteomicsDB" id="300071"/>
<dbReference type="Pumba" id="Q9QZM0"/>
<dbReference type="Antibodypedia" id="570">
    <property type="antibodies" value="300 antibodies from 33 providers"/>
</dbReference>
<dbReference type="DNASU" id="54609"/>
<dbReference type="Ensembl" id="ENSMUST00000060714.10">
    <property type="protein sequence ID" value="ENSMUSP00000056888.9"/>
    <property type="gene ID" value="ENSMUSG00000050148.10"/>
</dbReference>
<dbReference type="GeneID" id="54609"/>
<dbReference type="KEGG" id="mmu:54609"/>
<dbReference type="UCSC" id="uc009uqw.1">
    <property type="organism name" value="mouse"/>
</dbReference>
<dbReference type="AGR" id="MGI:1860283"/>
<dbReference type="CTD" id="29978"/>
<dbReference type="MGI" id="MGI:1860283">
    <property type="gene designation" value="Ubqln2"/>
</dbReference>
<dbReference type="VEuPathDB" id="HostDB:ENSMUSG00000050148"/>
<dbReference type="eggNOG" id="KOG0010">
    <property type="taxonomic scope" value="Eukaryota"/>
</dbReference>
<dbReference type="GeneTree" id="ENSGT00940000162603"/>
<dbReference type="HOGENOM" id="CLU_024293_4_0_1"/>
<dbReference type="InParanoid" id="Q9QZM0"/>
<dbReference type="OMA" id="MDNPITQ"/>
<dbReference type="OrthoDB" id="9450922at2759"/>
<dbReference type="PhylomeDB" id="Q9QZM0"/>
<dbReference type="TreeFam" id="TF314412"/>
<dbReference type="Reactome" id="R-MMU-8856825">
    <property type="pathway name" value="Cargo recognition for clathrin-mediated endocytosis"/>
</dbReference>
<dbReference type="BioGRID-ORCS" id="54609">
    <property type="hits" value="0 hits in 78 CRISPR screens"/>
</dbReference>
<dbReference type="ChiTaRS" id="Ubqln2">
    <property type="organism name" value="mouse"/>
</dbReference>
<dbReference type="PRO" id="PR:Q9QZM0"/>
<dbReference type="Proteomes" id="UP000000589">
    <property type="component" value="Chromosome X"/>
</dbReference>
<dbReference type="RNAct" id="Q9QZM0">
    <property type="molecule type" value="protein"/>
</dbReference>
<dbReference type="Bgee" id="ENSMUSG00000050148">
    <property type="expression patterns" value="Expressed in habenula and 256 other cell types or tissues"/>
</dbReference>
<dbReference type="GO" id="GO:0005776">
    <property type="term" value="C:autophagosome"/>
    <property type="evidence" value="ECO:0007669"/>
    <property type="project" value="UniProtKB-SubCell"/>
</dbReference>
<dbReference type="GO" id="GO:0005737">
    <property type="term" value="C:cytoplasm"/>
    <property type="evidence" value="ECO:0000250"/>
    <property type="project" value="UniProtKB"/>
</dbReference>
<dbReference type="GO" id="GO:0031410">
    <property type="term" value="C:cytoplasmic vesicle"/>
    <property type="evidence" value="ECO:0007669"/>
    <property type="project" value="UniProtKB-KW"/>
</dbReference>
<dbReference type="GO" id="GO:0005829">
    <property type="term" value="C:cytosol"/>
    <property type="evidence" value="ECO:0007669"/>
    <property type="project" value="Ensembl"/>
</dbReference>
<dbReference type="GO" id="GO:0005634">
    <property type="term" value="C:nucleus"/>
    <property type="evidence" value="ECO:0007669"/>
    <property type="project" value="UniProtKB-SubCell"/>
</dbReference>
<dbReference type="GO" id="GO:0005886">
    <property type="term" value="C:plasma membrane"/>
    <property type="evidence" value="ECO:0007669"/>
    <property type="project" value="Ensembl"/>
</dbReference>
<dbReference type="GO" id="GO:0042802">
    <property type="term" value="F:identical protein binding"/>
    <property type="evidence" value="ECO:0007669"/>
    <property type="project" value="Ensembl"/>
</dbReference>
<dbReference type="GO" id="GO:0140693">
    <property type="term" value="F:molecular condensate scaffold activity"/>
    <property type="evidence" value="ECO:0007669"/>
    <property type="project" value="Ensembl"/>
</dbReference>
<dbReference type="GO" id="GO:0006914">
    <property type="term" value="P:autophagy"/>
    <property type="evidence" value="ECO:0007669"/>
    <property type="project" value="UniProtKB-KW"/>
</dbReference>
<dbReference type="GO" id="GO:0036503">
    <property type="term" value="P:ERAD pathway"/>
    <property type="evidence" value="ECO:0000250"/>
    <property type="project" value="UniProtKB"/>
</dbReference>
<dbReference type="GO" id="GO:1900186">
    <property type="term" value="P:negative regulation of clathrin-dependent endocytosis"/>
    <property type="evidence" value="ECO:0000250"/>
    <property type="project" value="UniProtKB"/>
</dbReference>
<dbReference type="GO" id="GO:1904021">
    <property type="term" value="P:negative regulation of G protein-coupled receptor internalization"/>
    <property type="evidence" value="ECO:0000250"/>
    <property type="project" value="UniProtKB"/>
</dbReference>
<dbReference type="GO" id="GO:1904294">
    <property type="term" value="P:positive regulation of ERAD pathway"/>
    <property type="evidence" value="ECO:0000250"/>
    <property type="project" value="UniProtKB"/>
</dbReference>
<dbReference type="GO" id="GO:2000785">
    <property type="term" value="P:regulation of autophagosome assembly"/>
    <property type="evidence" value="ECO:0000250"/>
    <property type="project" value="UniProtKB"/>
</dbReference>
<dbReference type="GO" id="GO:0016241">
    <property type="term" value="P:regulation of macroautophagy"/>
    <property type="evidence" value="ECO:0000250"/>
    <property type="project" value="UniProtKB"/>
</dbReference>
<dbReference type="CDD" id="cd14399">
    <property type="entry name" value="UBA_PLICs"/>
    <property type="match status" value="1"/>
</dbReference>
<dbReference type="CDD" id="cd01808">
    <property type="entry name" value="Ubl_PLICs"/>
    <property type="match status" value="1"/>
</dbReference>
<dbReference type="FunFam" id="1.10.260.100:FF:000001">
    <property type="entry name" value="Ubiquilin 1"/>
    <property type="match status" value="1"/>
</dbReference>
<dbReference type="FunFam" id="1.10.260.100:FF:000003">
    <property type="entry name" value="Ubiquilin 1"/>
    <property type="match status" value="1"/>
</dbReference>
<dbReference type="FunFam" id="1.10.8.10:FF:000007">
    <property type="entry name" value="Ubiquilin 1"/>
    <property type="match status" value="1"/>
</dbReference>
<dbReference type="FunFam" id="3.10.20.90:FF:000081">
    <property type="entry name" value="ubiquilin-1 isoform X2"/>
    <property type="match status" value="1"/>
</dbReference>
<dbReference type="Gene3D" id="1.10.260.100">
    <property type="match status" value="2"/>
</dbReference>
<dbReference type="Gene3D" id="1.10.8.10">
    <property type="entry name" value="DNA helicase RuvA subunit, C-terminal domain"/>
    <property type="match status" value="1"/>
</dbReference>
<dbReference type="Gene3D" id="3.10.20.90">
    <property type="entry name" value="Phosphatidylinositol 3-kinase Catalytic Subunit, Chain A, domain 1"/>
    <property type="match status" value="1"/>
</dbReference>
<dbReference type="InterPro" id="IPR016024">
    <property type="entry name" value="ARM-type_fold"/>
</dbReference>
<dbReference type="InterPro" id="IPR006636">
    <property type="entry name" value="STI1_HS-bd"/>
</dbReference>
<dbReference type="InterPro" id="IPR015940">
    <property type="entry name" value="UBA"/>
</dbReference>
<dbReference type="InterPro" id="IPR009060">
    <property type="entry name" value="UBA-like_sf"/>
</dbReference>
<dbReference type="InterPro" id="IPR015496">
    <property type="entry name" value="Ubiquilin"/>
</dbReference>
<dbReference type="InterPro" id="IPR000626">
    <property type="entry name" value="Ubiquitin-like_dom"/>
</dbReference>
<dbReference type="InterPro" id="IPR029071">
    <property type="entry name" value="Ubiquitin-like_domsf"/>
</dbReference>
<dbReference type="PANTHER" id="PTHR10677">
    <property type="entry name" value="UBIQUILIN"/>
    <property type="match status" value="1"/>
</dbReference>
<dbReference type="PANTHER" id="PTHR10677:SF5">
    <property type="entry name" value="UBIQUILIN-2"/>
    <property type="match status" value="1"/>
</dbReference>
<dbReference type="Pfam" id="PF00627">
    <property type="entry name" value="UBA"/>
    <property type="match status" value="1"/>
</dbReference>
<dbReference type="Pfam" id="PF00240">
    <property type="entry name" value="ubiquitin"/>
    <property type="match status" value="1"/>
</dbReference>
<dbReference type="Pfam" id="PF23195">
    <property type="entry name" value="UBQLN1"/>
    <property type="match status" value="1"/>
</dbReference>
<dbReference type="SMART" id="SM00727">
    <property type="entry name" value="STI1"/>
    <property type="match status" value="4"/>
</dbReference>
<dbReference type="SMART" id="SM00165">
    <property type="entry name" value="UBA"/>
    <property type="match status" value="1"/>
</dbReference>
<dbReference type="SMART" id="SM00213">
    <property type="entry name" value="UBQ"/>
    <property type="match status" value="1"/>
</dbReference>
<dbReference type="SUPFAM" id="SSF48371">
    <property type="entry name" value="ARM repeat"/>
    <property type="match status" value="1"/>
</dbReference>
<dbReference type="SUPFAM" id="SSF46934">
    <property type="entry name" value="UBA-like"/>
    <property type="match status" value="1"/>
</dbReference>
<dbReference type="SUPFAM" id="SSF54236">
    <property type="entry name" value="Ubiquitin-like"/>
    <property type="match status" value="1"/>
</dbReference>
<dbReference type="PROSITE" id="PS50030">
    <property type="entry name" value="UBA"/>
    <property type="match status" value="1"/>
</dbReference>
<dbReference type="PROSITE" id="PS50053">
    <property type="entry name" value="UBIQUITIN_2"/>
    <property type="match status" value="1"/>
</dbReference>
<protein>
    <recommendedName>
        <fullName>Ubiquilin-2</fullName>
    </recommendedName>
    <alternativeName>
        <fullName>Chap1</fullName>
    </alternativeName>
    <alternativeName>
        <fullName>DSK2 homolog</fullName>
    </alternativeName>
    <alternativeName>
        <fullName>Protein linking IAP with cytoskeleton 2</fullName>
        <shortName>PLIC-2</shortName>
    </alternativeName>
    <alternativeName>
        <fullName>Ubiquitin-like product Chap1/Dsk2</fullName>
    </alternativeName>
</protein>
<organism>
    <name type="scientific">Mus musculus</name>
    <name type="common">Mouse</name>
    <dbReference type="NCBI Taxonomy" id="10090"/>
    <lineage>
        <taxon>Eukaryota</taxon>
        <taxon>Metazoa</taxon>
        <taxon>Chordata</taxon>
        <taxon>Craniata</taxon>
        <taxon>Vertebrata</taxon>
        <taxon>Euteleostomi</taxon>
        <taxon>Mammalia</taxon>
        <taxon>Eutheria</taxon>
        <taxon>Euarchontoglires</taxon>
        <taxon>Glires</taxon>
        <taxon>Rodentia</taxon>
        <taxon>Myomorpha</taxon>
        <taxon>Muroidea</taxon>
        <taxon>Muridae</taxon>
        <taxon>Murinae</taxon>
        <taxon>Mus</taxon>
        <taxon>Mus</taxon>
    </lineage>
</organism>
<reference key="1">
    <citation type="journal article" date="1999" name="Mol. Cell">
        <title>Ubiquitin-related proteins regulate interaction of vimentin intermediate filaments with the plasma membrane.</title>
        <authorList>
            <person name="Wu A.-L."/>
            <person name="Wang J."/>
            <person name="Zheleznyak A."/>
            <person name="Brown E.J."/>
        </authorList>
    </citation>
    <scope>NUCLEOTIDE SEQUENCE [MRNA]</scope>
    <scope>FUNCTION</scope>
    <scope>SUBCELLULAR LOCATION</scope>
    <scope>TISSUE SPECIFICITY</scope>
    <scope>INTERACTION WITH CD47</scope>
    <source>
        <strain>Swiss Webster / NIH</strain>
        <tissue>Embryo</tissue>
    </source>
</reference>
<reference key="2">
    <citation type="journal article" date="2009" name="PLoS Biol.">
        <title>Lineage-specific biology revealed by a finished genome assembly of the mouse.</title>
        <authorList>
            <person name="Church D.M."/>
            <person name="Goodstadt L."/>
            <person name="Hillier L.W."/>
            <person name="Zody M.C."/>
            <person name="Goldstein S."/>
            <person name="She X."/>
            <person name="Bult C.J."/>
            <person name="Agarwala R."/>
            <person name="Cherry J.L."/>
            <person name="DiCuccio M."/>
            <person name="Hlavina W."/>
            <person name="Kapustin Y."/>
            <person name="Meric P."/>
            <person name="Maglott D."/>
            <person name="Birtle Z."/>
            <person name="Marques A.C."/>
            <person name="Graves T."/>
            <person name="Zhou S."/>
            <person name="Teague B."/>
            <person name="Potamousis K."/>
            <person name="Churas C."/>
            <person name="Place M."/>
            <person name="Herschleb J."/>
            <person name="Runnheim R."/>
            <person name="Forrest D."/>
            <person name="Amos-Landgraf J."/>
            <person name="Schwartz D.C."/>
            <person name="Cheng Z."/>
            <person name="Lindblad-Toh K."/>
            <person name="Eichler E.E."/>
            <person name="Ponting C.P."/>
        </authorList>
    </citation>
    <scope>NUCLEOTIDE SEQUENCE [LARGE SCALE GENOMIC DNA]</scope>
    <source>
        <strain>C57BL/6J</strain>
    </source>
</reference>
<reference key="3">
    <citation type="submission" date="2005-07" db="EMBL/GenBank/DDBJ databases">
        <authorList>
            <person name="Mural R.J."/>
            <person name="Adams M.D."/>
            <person name="Myers E.W."/>
            <person name="Smith H.O."/>
            <person name="Venter J.C."/>
        </authorList>
    </citation>
    <scope>NUCLEOTIDE SEQUENCE [LARGE SCALE GENOMIC DNA]</scope>
</reference>
<reference key="4">
    <citation type="journal article" date="2004" name="Genome Res.">
        <title>The status, quality, and expansion of the NIH full-length cDNA project: the Mammalian Gene Collection (MGC).</title>
        <authorList>
            <consortium name="The MGC Project Team"/>
        </authorList>
    </citation>
    <scope>NUCLEOTIDE SEQUENCE [LARGE SCALE MRNA]</scope>
    <source>
        <strain>C57BL/6J</strain>
        <tissue>Brain</tissue>
    </source>
</reference>
<reference key="5">
    <citation type="journal article" date="2004" name="Mol. Cell. Proteomics">
        <title>Phosphoproteomic analysis of the developing mouse brain.</title>
        <authorList>
            <person name="Ballif B.A."/>
            <person name="Villen J."/>
            <person name="Beausoleil S.A."/>
            <person name="Schwartz D."/>
            <person name="Gygi S.P."/>
        </authorList>
    </citation>
    <scope>PHOSPHORYLATION [LARGE SCALE ANALYSIS] AT SER-25</scope>
    <scope>IDENTIFICATION BY MASS SPECTROMETRY [LARGE SCALE ANALYSIS]</scope>
    <source>
        <tissue>Embryonic brain</tissue>
    </source>
</reference>
<reference key="6">
    <citation type="journal article" date="2010" name="Cell">
        <title>A tissue-specific atlas of mouse protein phosphorylation and expression.</title>
        <authorList>
            <person name="Huttlin E.L."/>
            <person name="Jedrychowski M.P."/>
            <person name="Elias J.E."/>
            <person name="Goswami T."/>
            <person name="Rad R."/>
            <person name="Beausoleil S.A."/>
            <person name="Villen J."/>
            <person name="Haas W."/>
            <person name="Sowa M.E."/>
            <person name="Gygi S.P."/>
        </authorList>
    </citation>
    <scope>IDENTIFICATION BY MASS SPECTROMETRY [LARGE SCALE ANALYSIS]</scope>
    <source>
        <tissue>Brain</tissue>
        <tissue>Brown adipose tissue</tissue>
        <tissue>Heart</tissue>
        <tissue>Kidney</tissue>
        <tissue>Liver</tissue>
        <tissue>Lung</tissue>
        <tissue>Pancreas</tissue>
        <tissue>Spleen</tissue>
        <tissue>Testis</tissue>
    </source>
</reference>
<keyword id="KW-0007">Acetylation</keyword>
<keyword id="KW-0072">Autophagy</keyword>
<keyword id="KW-0963">Cytoplasm</keyword>
<keyword id="KW-0968">Cytoplasmic vesicle</keyword>
<keyword id="KW-0472">Membrane</keyword>
<keyword id="KW-0539">Nucleus</keyword>
<keyword id="KW-0597">Phosphoprotein</keyword>
<keyword id="KW-1185">Reference proteome</keyword>
<keyword id="KW-0677">Repeat</keyword>
<comment type="function">
    <text evidence="1 6">Plays an important role in the regulation of different protein degradation mechanisms and pathways including ubiquitin-proteasome system (UPS), autophagy and the endoplasmic reticulum-associated protein degradation (ERAD) pathway. Mediates the proteasomal targeting of misfolded or accumulated proteins for degradation by binding (via UBA domain) to their polyubiquitin chains and by interacting (via ubiquitin-like domain) with the subunits of the proteasome. Plays a role in the ERAD pathway via its interaction with ER-localized proteins FAF2/UBXD8 and HERPUD1 and may form a link between the polyubiquitinated ERAD substrates and the proteasome. Involved in the regulation of macroautophagy and autophagosome formation; required for maturation of autophagy-related protein LC3 from the cytosolic form LC3-I to the membrane-bound form LC3-II and may assist in the maturation of autophagosomes to autolysosomes by mediating autophagosome-lysosome fusion. Negatively regulates the endocytosis of GPCR receptors: AVPR2 and ADRB2, by specifically reducing the rate at which receptor-arrestin complexes concentrate in clathrin-coated pits (CCPs) (By similarity). Links CD47 to vimentin-containing intermediate filaments of the cytoskeleton (PubMed:10549293).</text>
</comment>
<comment type="subunit">
    <text evidence="1 6">Homodimer. Forms heterodimer with UBQLN1. Binds UBE3A and BTRC. Interacts with the 19S proteasome subunit. Interacts with C9orf72 (By similarity). Binds CD47 (PubMed:10549293). Interacts with HNRNPA1 and HNRNPU. Found in a complex with UBQLN1 and MAP1LC3A/B/C. Interacts with EPS15, EPN1 and EPN2. Interacts with HERPUD1. Interacts with RAD23A. Interacts with TARDBP. Interacts (via C-terminus) with FAF2 (via N-terminus). Interacts with UBQLN4 (By similarity).</text>
</comment>
<comment type="subcellular location">
    <subcellularLocation>
        <location evidence="6">Cytoplasm</location>
    </subcellularLocation>
    <subcellularLocation>
        <location evidence="6">Nucleus</location>
    </subcellularLocation>
    <subcellularLocation>
        <location evidence="6">Membrane</location>
    </subcellularLocation>
    <subcellularLocation>
        <location evidence="1">Cytoplasmic vesicle</location>
        <location evidence="1">Autophagosome</location>
    </subcellularLocation>
    <text evidence="1">Colocalizes with a subset of proteasomes, namely those that are cytoskeleton associated or free in the cytosol. Associated with fibers in mitotic cells.</text>
</comment>
<comment type="tissue specificity">
    <text evidence="6">Highly expressed in smooth muscle. Expression in other tissues is very low.</text>
</comment>
<comment type="domain">
    <text evidence="1">The ubiquitin-like domain is essential for its inhibitory effect on GPCR endocytosis. Mediates its association with the subunits of the proteasome.</text>
</comment>
<comment type="domain">
    <text evidence="1">The UBA domain is essential for its association with microtubule-associated protein 1 light chain 3 (MAP1LC3). Mediates its association with ubiquitinated substrates.</text>
</comment>
<comment type="domain">
    <text evidence="1">Dimerization is dependent upon the central region of the protein containing the STI1 domains and is independent of its ubiquitin-like and UBA domains.</text>
</comment>
<comment type="PTM">
    <text evidence="1">Degraded during macroautophagy.</text>
</comment>
<accession>Q9QZM0</accession>
<accession>B1AY62</accession>
<accession>Q7TSJ8</accession>
<accession>Q8VDH9</accession>
<evidence type="ECO:0000250" key="1">
    <source>
        <dbReference type="UniProtKB" id="Q9UHD9"/>
    </source>
</evidence>
<evidence type="ECO:0000255" key="2"/>
<evidence type="ECO:0000255" key="3">
    <source>
        <dbReference type="PROSITE-ProRule" id="PRU00212"/>
    </source>
</evidence>
<evidence type="ECO:0000255" key="4">
    <source>
        <dbReference type="PROSITE-ProRule" id="PRU00214"/>
    </source>
</evidence>
<evidence type="ECO:0000256" key="5">
    <source>
        <dbReference type="SAM" id="MobiDB-lite"/>
    </source>
</evidence>
<evidence type="ECO:0000269" key="6">
    <source>
    </source>
</evidence>
<evidence type="ECO:0000305" key="7"/>
<evidence type="ECO:0007744" key="8">
    <source>
    </source>
</evidence>
<sequence>MAENGESSGPPRPSRGPAAAPGAASPPAEPKIIKVTVKTPKEKEEFAVPENSTVQQFKEAISKRFKSQTDQLVLIFAGKILKDQDTLMQHGIHDGLTVHLVIKSQNRPQGQATTQPSTTAGTSTTTTTTTTAAAPAATTSSAPRSSSTPTTTNSSSFGLGSLSSLSNLGLNSPNFTELQNQMQQQLLASPEMMIQIMENPFVQSMLSNPDLMRQLIMANPQMQQLIQRNPEISHLLNNPDIMRQTLEIARNPAMMQEMMRNQDLALSNLESIPGGYNALRRMYTDIQEPMLNAAQEQFGGNPFATVGSSSTSGEGTQPSRTENRDPLPNPWAPPPTTQTAATTTTTTTTSSGSGSGSSSSSTTAGNTMAAANYVASIFSTPGMQSLLQQITENPQLIQNMLSAPYMRSMMQSLSQNPDMAAQMMLSSPLFTSNPQLQEQMRPQLPNFLQQMQNPETIAAMSNPRAMQALMQIQQGLQTLATEAPGLIPSFAPGVGMGVLGTAITPVGPVTPIGPIGPIVPFTPIGPIGPIGPTGPASSPGSTGTGIPPATTVSSSAPTETISPTSESGPNQQFIQQMVQALTGGSPPQPPNPEVRFQQQLEQLNAMGFLNREANLQALIATGGDINAAIERLLGSQPS</sequence>